<sequence length="84" mass="9665">MKKVLIAPIKFYQKFISPIFPASCRYRPTCSAYMIEAIEKHGLKGFLMGIARILRCHPFVEGGEDPVPNHFTLRRNKKEKPSKS</sequence>
<protein>
    <recommendedName>
        <fullName evidence="1">Putative membrane protein insertion efficiency factor</fullName>
    </recommendedName>
</protein>
<comment type="function">
    <text evidence="1">Could be involved in insertion of integral membrane proteins into the membrane.</text>
</comment>
<comment type="subcellular location">
    <subcellularLocation>
        <location evidence="1">Cell membrane</location>
        <topology evidence="1">Peripheral membrane protein</topology>
        <orientation evidence="1">Cytoplasmic side</orientation>
    </subcellularLocation>
</comment>
<comment type="similarity">
    <text evidence="1">Belongs to the UPF0161 family.</text>
</comment>
<keyword id="KW-1003">Cell membrane</keyword>
<keyword id="KW-0472">Membrane</keyword>
<keyword id="KW-1185">Reference proteome</keyword>
<evidence type="ECO:0000255" key="1">
    <source>
        <dbReference type="HAMAP-Rule" id="MF_00386"/>
    </source>
</evidence>
<evidence type="ECO:0000256" key="2">
    <source>
        <dbReference type="SAM" id="MobiDB-lite"/>
    </source>
</evidence>
<dbReference type="EMBL" id="AE014133">
    <property type="protein sequence ID" value="AAN59345.1"/>
    <property type="molecule type" value="Genomic_DNA"/>
</dbReference>
<dbReference type="RefSeq" id="NP_722039.1">
    <property type="nucleotide sequence ID" value="NC_004350.2"/>
</dbReference>
<dbReference type="STRING" id="210007.SMU_1710c"/>
<dbReference type="DNASU" id="1028941"/>
<dbReference type="KEGG" id="smu:SMU_1710c"/>
<dbReference type="PATRIC" id="fig|210007.7.peg.1528"/>
<dbReference type="eggNOG" id="COG0759">
    <property type="taxonomic scope" value="Bacteria"/>
</dbReference>
<dbReference type="HOGENOM" id="CLU_144811_5_2_9"/>
<dbReference type="OrthoDB" id="9801753at2"/>
<dbReference type="PhylomeDB" id="Q8DSR1"/>
<dbReference type="Proteomes" id="UP000002512">
    <property type="component" value="Chromosome"/>
</dbReference>
<dbReference type="GO" id="GO:0005886">
    <property type="term" value="C:plasma membrane"/>
    <property type="evidence" value="ECO:0007669"/>
    <property type="project" value="UniProtKB-SubCell"/>
</dbReference>
<dbReference type="HAMAP" id="MF_00386">
    <property type="entry name" value="UPF0161_YidD"/>
    <property type="match status" value="1"/>
</dbReference>
<dbReference type="InterPro" id="IPR002696">
    <property type="entry name" value="Membr_insert_effic_factor_YidD"/>
</dbReference>
<dbReference type="NCBIfam" id="TIGR00278">
    <property type="entry name" value="membrane protein insertion efficiency factor YidD"/>
    <property type="match status" value="1"/>
</dbReference>
<dbReference type="PANTHER" id="PTHR33383">
    <property type="entry name" value="MEMBRANE PROTEIN INSERTION EFFICIENCY FACTOR-RELATED"/>
    <property type="match status" value="1"/>
</dbReference>
<dbReference type="PANTHER" id="PTHR33383:SF1">
    <property type="entry name" value="MEMBRANE PROTEIN INSERTION EFFICIENCY FACTOR-RELATED"/>
    <property type="match status" value="1"/>
</dbReference>
<dbReference type="Pfam" id="PF01809">
    <property type="entry name" value="YidD"/>
    <property type="match status" value="1"/>
</dbReference>
<dbReference type="SMART" id="SM01234">
    <property type="entry name" value="Haemolytic"/>
    <property type="match status" value="1"/>
</dbReference>
<feature type="chain" id="PRO_0000171880" description="Putative membrane protein insertion efficiency factor">
    <location>
        <begin position="1"/>
        <end position="84"/>
    </location>
</feature>
<feature type="region of interest" description="Disordered" evidence="2">
    <location>
        <begin position="63"/>
        <end position="84"/>
    </location>
</feature>
<name>YIDD_STRMU</name>
<organism>
    <name type="scientific">Streptococcus mutans serotype c (strain ATCC 700610 / UA159)</name>
    <dbReference type="NCBI Taxonomy" id="210007"/>
    <lineage>
        <taxon>Bacteria</taxon>
        <taxon>Bacillati</taxon>
        <taxon>Bacillota</taxon>
        <taxon>Bacilli</taxon>
        <taxon>Lactobacillales</taxon>
        <taxon>Streptococcaceae</taxon>
        <taxon>Streptococcus</taxon>
    </lineage>
</organism>
<reference key="1">
    <citation type="journal article" date="2002" name="Proc. Natl. Acad. Sci. U.S.A.">
        <title>Genome sequence of Streptococcus mutans UA159, a cariogenic dental pathogen.</title>
        <authorList>
            <person name="Ajdic D.J."/>
            <person name="McShan W.M."/>
            <person name="McLaughlin R.E."/>
            <person name="Savic G."/>
            <person name="Chang J."/>
            <person name="Carson M.B."/>
            <person name="Primeaux C."/>
            <person name="Tian R."/>
            <person name="Kenton S."/>
            <person name="Jia H.G."/>
            <person name="Lin S.P."/>
            <person name="Qian Y."/>
            <person name="Li S."/>
            <person name="Zhu H."/>
            <person name="Najar F.Z."/>
            <person name="Lai H."/>
            <person name="White J."/>
            <person name="Roe B.A."/>
            <person name="Ferretti J.J."/>
        </authorList>
    </citation>
    <scope>NUCLEOTIDE SEQUENCE [LARGE SCALE GENOMIC DNA]</scope>
    <source>
        <strain>ATCC 700610 / UA159</strain>
    </source>
</reference>
<proteinExistence type="inferred from homology"/>
<gene>
    <name type="ordered locus">SMU_1710c</name>
</gene>
<accession>Q8DSR1</accession>